<protein>
    <recommendedName>
        <fullName evidence="1">Deoxyguanosinetriphosphate triphosphohydrolase-like protein</fullName>
    </recommendedName>
</protein>
<comment type="similarity">
    <text evidence="1">Belongs to the dGTPase family. Type 2 subfamily.</text>
</comment>
<evidence type="ECO:0000255" key="1">
    <source>
        <dbReference type="HAMAP-Rule" id="MF_01212"/>
    </source>
</evidence>
<evidence type="ECO:0000255" key="2">
    <source>
        <dbReference type="PROSITE-ProRule" id="PRU01175"/>
    </source>
</evidence>
<organism>
    <name type="scientific">Shewanella halifaxensis (strain HAW-EB4)</name>
    <dbReference type="NCBI Taxonomy" id="458817"/>
    <lineage>
        <taxon>Bacteria</taxon>
        <taxon>Pseudomonadati</taxon>
        <taxon>Pseudomonadota</taxon>
        <taxon>Gammaproteobacteria</taxon>
        <taxon>Alteromonadales</taxon>
        <taxon>Shewanellaceae</taxon>
        <taxon>Shewanella</taxon>
    </lineage>
</organism>
<reference key="1">
    <citation type="submission" date="2008-01" db="EMBL/GenBank/DDBJ databases">
        <title>Complete sequence of Shewanella halifaxensis HAW-EB4.</title>
        <authorList>
            <consortium name="US DOE Joint Genome Institute"/>
            <person name="Copeland A."/>
            <person name="Lucas S."/>
            <person name="Lapidus A."/>
            <person name="Glavina del Rio T."/>
            <person name="Dalin E."/>
            <person name="Tice H."/>
            <person name="Bruce D."/>
            <person name="Goodwin L."/>
            <person name="Pitluck S."/>
            <person name="Sims D."/>
            <person name="Brettin T."/>
            <person name="Detter J.C."/>
            <person name="Han C."/>
            <person name="Kuske C.R."/>
            <person name="Schmutz J."/>
            <person name="Larimer F."/>
            <person name="Land M."/>
            <person name="Hauser L."/>
            <person name="Kyrpides N."/>
            <person name="Kim E."/>
            <person name="Zhao J.-S."/>
            <person name="Richardson P."/>
        </authorList>
    </citation>
    <scope>NUCLEOTIDE SEQUENCE [LARGE SCALE GENOMIC DNA]</scope>
    <source>
        <strain>HAW-EB4</strain>
    </source>
</reference>
<gene>
    <name type="ordered locus">Shal_2248</name>
</gene>
<name>DGTL1_SHEHH</name>
<sequence>MTQSIWNERRLGEDKLRRNDHRNPYQRDRARILHSAAFRRLQAKTQVLGVGMNDFYRTRLTHSLEVSQIGTGIRAQLKQKQPEFNPLLNSMSIIESLCLAHDIGHPPFGHGGEIALNYMMRAHGGFEGNGQTFRILTRLEPYTEFYGMNLCRRTLLGILKYPAPYSRLCREQPNETVQHFRQLKPSQWPPVKGIFDDDLAILDWVLEPLSKADKQLFLSSYTVADGQHKRTRYKSLDCSIMELADDIAYAVHDLEDAIVMGIVSEQQWHNDVTQVLCNSEDEWLQNEFATMSLRLFSAKHHQRKDAIGTLVNGFVTAISINEVEGFDEPLLKYNAALEPAFDIALNVLKQFVFKYVIRKPEIQMLEYKGHQIVMELFEAFISDPERLLPLNTQERWIASEKQGENSHRVIADYISGMTDEFAARLHQHLFSPKSGSMMELNCEF</sequence>
<keyword id="KW-0378">Hydrolase</keyword>
<feature type="chain" id="PRO_1000138928" description="Deoxyguanosinetriphosphate triphosphohydrolase-like protein">
    <location>
        <begin position="1"/>
        <end position="444"/>
    </location>
</feature>
<feature type="domain" description="HD" evidence="2">
    <location>
        <begin position="59"/>
        <end position="250"/>
    </location>
</feature>
<proteinExistence type="inferred from homology"/>
<accession>B0TUS9</accession>
<dbReference type="EMBL" id="CP000931">
    <property type="protein sequence ID" value="ABZ76807.1"/>
    <property type="molecule type" value="Genomic_DNA"/>
</dbReference>
<dbReference type="RefSeq" id="WP_012277336.1">
    <property type="nucleotide sequence ID" value="NC_010334.1"/>
</dbReference>
<dbReference type="SMR" id="B0TUS9"/>
<dbReference type="STRING" id="458817.Shal_2248"/>
<dbReference type="KEGG" id="shl:Shal_2248"/>
<dbReference type="eggNOG" id="COG0232">
    <property type="taxonomic scope" value="Bacteria"/>
</dbReference>
<dbReference type="HOGENOM" id="CLU_028163_0_0_6"/>
<dbReference type="OrthoDB" id="9803619at2"/>
<dbReference type="Proteomes" id="UP000001317">
    <property type="component" value="Chromosome"/>
</dbReference>
<dbReference type="GO" id="GO:0008832">
    <property type="term" value="F:dGTPase activity"/>
    <property type="evidence" value="ECO:0007669"/>
    <property type="project" value="TreeGrafter"/>
</dbReference>
<dbReference type="GO" id="GO:0006203">
    <property type="term" value="P:dGTP catabolic process"/>
    <property type="evidence" value="ECO:0007669"/>
    <property type="project" value="TreeGrafter"/>
</dbReference>
<dbReference type="CDD" id="cd00077">
    <property type="entry name" value="HDc"/>
    <property type="match status" value="1"/>
</dbReference>
<dbReference type="Gene3D" id="1.10.3210.10">
    <property type="entry name" value="Hypothetical protein af1432"/>
    <property type="match status" value="1"/>
</dbReference>
<dbReference type="HAMAP" id="MF_01212">
    <property type="entry name" value="dGTPase_type2"/>
    <property type="match status" value="1"/>
</dbReference>
<dbReference type="InterPro" id="IPR006261">
    <property type="entry name" value="dGTPase"/>
</dbReference>
<dbReference type="InterPro" id="IPR050135">
    <property type="entry name" value="dGTPase-like"/>
</dbReference>
<dbReference type="InterPro" id="IPR023023">
    <property type="entry name" value="dNTPase_2"/>
</dbReference>
<dbReference type="InterPro" id="IPR003607">
    <property type="entry name" value="HD/PDEase_dom"/>
</dbReference>
<dbReference type="InterPro" id="IPR006674">
    <property type="entry name" value="HD_domain"/>
</dbReference>
<dbReference type="InterPro" id="IPR026875">
    <property type="entry name" value="PHydrolase_assoc_dom"/>
</dbReference>
<dbReference type="NCBIfam" id="NF041026">
    <property type="entry name" value="antiphage_dGTPase"/>
    <property type="match status" value="1"/>
</dbReference>
<dbReference type="NCBIfam" id="TIGR01353">
    <property type="entry name" value="dGTP_triPase"/>
    <property type="match status" value="1"/>
</dbReference>
<dbReference type="NCBIfam" id="NF003701">
    <property type="entry name" value="PRK05318.1"/>
    <property type="match status" value="1"/>
</dbReference>
<dbReference type="PANTHER" id="PTHR11373:SF40">
    <property type="entry name" value="DEOXYGUANOSINETRIPHOSPHATE TRIPHOSPHOHYDROLASE-LIKE PROTEIN 2"/>
    <property type="match status" value="1"/>
</dbReference>
<dbReference type="PANTHER" id="PTHR11373">
    <property type="entry name" value="DEOXYNUCLEOSIDE TRIPHOSPHATE TRIPHOSPHOHYDROLASE"/>
    <property type="match status" value="1"/>
</dbReference>
<dbReference type="Pfam" id="PF01966">
    <property type="entry name" value="HD"/>
    <property type="match status" value="1"/>
</dbReference>
<dbReference type="Pfam" id="PF13286">
    <property type="entry name" value="HD_assoc"/>
    <property type="match status" value="1"/>
</dbReference>
<dbReference type="SMART" id="SM00471">
    <property type="entry name" value="HDc"/>
    <property type="match status" value="1"/>
</dbReference>
<dbReference type="SUPFAM" id="SSF109604">
    <property type="entry name" value="HD-domain/PDEase-like"/>
    <property type="match status" value="1"/>
</dbReference>
<dbReference type="PROSITE" id="PS51831">
    <property type="entry name" value="HD"/>
    <property type="match status" value="1"/>
</dbReference>